<organismHost>
    <name type="scientific">Homo sapiens</name>
    <name type="common">Human</name>
    <dbReference type="NCBI Taxonomy" id="9606"/>
</organismHost>
<name>RP30_VACCC</name>
<comment type="function">
    <text evidence="1">Part of the DNA-dependent RNA polymerase which catalyzes the transcription of viral DNA into RNA using the four ribonucleoside triphosphates as substrates. Responsible for the transcription of early, intermediate and late genes. DNA-dependent RNA polymerase associates with the early transcription factor (ETF), itself composed of OPG118 and OPG134, thereby allowing the early genes transcription. Late transcription, and probably also intermediate transcription, require newly synthesized RNA polymerase.</text>
</comment>
<comment type="catalytic activity">
    <reaction>
        <text>RNA(n) + a ribonucleoside 5'-triphosphate = RNA(n+1) + diphosphate</text>
        <dbReference type="Rhea" id="RHEA:21248"/>
        <dbReference type="Rhea" id="RHEA-COMP:14527"/>
        <dbReference type="Rhea" id="RHEA-COMP:17342"/>
        <dbReference type="ChEBI" id="CHEBI:33019"/>
        <dbReference type="ChEBI" id="CHEBI:61557"/>
        <dbReference type="ChEBI" id="CHEBI:140395"/>
        <dbReference type="EC" id="2.7.7.6"/>
    </reaction>
</comment>
<comment type="subunit">
    <text evidence="1">The DNA-dependent RNA polymerase (vRNAP) consists of eight subunits encoded by early viral genes and termed according to their apparent molecular masses Rpo147, Rpo132, Rpo35, Rpo30, Rpo22, Rpo19, Rpo18, and Rpo7. The same holoenzyme, with the addition of the transcription-specificity factor RAP94, is used for early gene expression.</text>
</comment>
<comment type="subcellular location">
    <subcellularLocation>
        <location evidence="1">Virion</location>
    </subcellularLocation>
    <subcellularLocation>
        <location evidence="1">Host cytoplasm</location>
    </subcellularLocation>
    <text evidence="1">All the enzymes and other proteins required to synthesize early mRNAs are packaged within the virion core along with the DNA genome. This is necessary because viral early mRNAs are synthesized within minutes after virus entry into the cell and are extruded through pores in the core particle.</text>
</comment>
<comment type="alternative products">
    <event type="alternative initiation"/>
    <isoform>
        <id>P21082-1</id>
        <name>Long</name>
        <sequence type="displayed"/>
    </isoform>
    <isoform>
        <id>P21082-2</id>
        <name>Short</name>
        <sequence type="described" ref="VSP_018892"/>
    </isoform>
</comment>
<comment type="induction">
    <text evidence="2">Expressed in the early phase of the viral replicative cycle.</text>
</comment>
<comment type="similarity">
    <text evidence="5">Belongs to the poxviridae DNA-directed RNA polymerase 30 kDa subunit family.</text>
</comment>
<keyword id="KW-0002">3D-structure</keyword>
<keyword id="KW-0024">Alternative initiation</keyword>
<keyword id="KW-0240">DNA-directed RNA polymerase</keyword>
<keyword id="KW-0244">Early protein</keyword>
<keyword id="KW-1035">Host cytoplasm</keyword>
<keyword id="KW-0479">Metal-binding</keyword>
<keyword id="KW-0548">Nucleotidyltransferase</keyword>
<keyword id="KW-1185">Reference proteome</keyword>
<keyword id="KW-0804">Transcription</keyword>
<keyword id="KW-0808">Transferase</keyword>
<keyword id="KW-0946">Virion</keyword>
<keyword id="KW-0862">Zinc</keyword>
<keyword id="KW-0863">Zinc-finger</keyword>
<reference key="1">
    <citation type="journal article" date="1990" name="Virology">
        <title>The complete DNA sequence of vaccinia virus.</title>
        <authorList>
            <person name="Goebel S.J."/>
            <person name="Johnson G.P."/>
            <person name="Perkus M.E."/>
            <person name="Davis S.W."/>
            <person name="Winslow J.P."/>
            <person name="Paoletti E."/>
        </authorList>
    </citation>
    <scope>NUCLEOTIDE SEQUENCE [LARGE SCALE GENOMIC DNA]</scope>
</reference>
<reference key="2">
    <citation type="journal article" date="1990" name="Virology">
        <title>Appendix to 'The complete DNA sequence of vaccinia virus'.</title>
        <authorList>
            <person name="Goebel S.J."/>
            <person name="Johnson G.P."/>
            <person name="Perkus M.E."/>
            <person name="Davis S.W."/>
            <person name="Winslow J.P."/>
            <person name="Paoletti E."/>
        </authorList>
    </citation>
    <scope>NUCLEOTIDE SEQUENCE [LARGE SCALE GENOMIC DNA]</scope>
</reference>
<reference key="3">
    <citation type="journal article" date="2003" name="J. Gen. Virol.">
        <title>Vaccinia virus transcription.</title>
        <authorList>
            <person name="Broyles S.S."/>
        </authorList>
    </citation>
    <scope>REVIEW</scope>
</reference>
<sequence>MENVYISSYSSNEQTSMAVAATDIRELLSQYVDDANLEDLIEWAMEKSSKYYIKNIGNTKSNIEETKFESKNNIGIEYSKDSRNKLSYRNKPSIATNLEYKTLCDMIKGTSGTEKEFLRYLLFGIKCIKKGVEYNIDKIKDVSYNDYFNVLDEKYNTPCPNCKSRNTTPMMIQTRAADEPPLVRHACRDCKQHFKPPKFRAFRNLNVTTQSIHENKEITEILPDNNPSPPESPEPASPIDDGLIRATFDRNDEPPEDDE</sequence>
<dbReference type="EC" id="2.7.7.6"/>
<dbReference type="EMBL" id="M35027">
    <property type="protein sequence ID" value="AAA48041.1"/>
    <property type="molecule type" value="Genomic_DNA"/>
</dbReference>
<dbReference type="PIR" id="H42508">
    <property type="entry name" value="H42508"/>
</dbReference>
<dbReference type="PDB" id="8P0J">
    <property type="method" value="EM"/>
    <property type="resolution" value="2.39 A"/>
    <property type="chains" value="S=1-259"/>
</dbReference>
<dbReference type="PDB" id="8P0K">
    <property type="method" value="EM"/>
    <property type="resolution" value="2.64 A"/>
    <property type="chains" value="S=1-259"/>
</dbReference>
<dbReference type="PDB" id="8P0N">
    <property type="method" value="EM"/>
    <property type="resolution" value="2.58 A"/>
    <property type="chains" value="S=1-259"/>
</dbReference>
<dbReference type="PDB" id="8RQK">
    <property type="method" value="EM"/>
    <property type="resolution" value="2.65 A"/>
    <property type="chains" value="S=1-259"/>
</dbReference>
<dbReference type="PDBsum" id="8P0J"/>
<dbReference type="PDBsum" id="8P0K"/>
<dbReference type="PDBsum" id="8P0N"/>
<dbReference type="PDBsum" id="8RQK"/>
<dbReference type="EMDB" id="EMD-17334"/>
<dbReference type="EMDB" id="EMD-17335"/>
<dbReference type="EMDB" id="EMD-17336"/>
<dbReference type="EMDB" id="EMD-19442"/>
<dbReference type="SMR" id="P21082"/>
<dbReference type="Proteomes" id="UP000008269">
    <property type="component" value="Segment"/>
</dbReference>
<dbReference type="GO" id="GO:0000428">
    <property type="term" value="C:DNA-directed RNA polymerase complex"/>
    <property type="evidence" value="ECO:0007669"/>
    <property type="project" value="UniProtKB-KW"/>
</dbReference>
<dbReference type="GO" id="GO:0030430">
    <property type="term" value="C:host cell cytoplasm"/>
    <property type="evidence" value="ECO:0007669"/>
    <property type="project" value="UniProtKB-SubCell"/>
</dbReference>
<dbReference type="GO" id="GO:0044423">
    <property type="term" value="C:virion component"/>
    <property type="evidence" value="ECO:0007669"/>
    <property type="project" value="UniProtKB-KW"/>
</dbReference>
<dbReference type="GO" id="GO:0003677">
    <property type="term" value="F:DNA binding"/>
    <property type="evidence" value="ECO:0007669"/>
    <property type="project" value="InterPro"/>
</dbReference>
<dbReference type="GO" id="GO:0003899">
    <property type="term" value="F:DNA-directed RNA polymerase activity"/>
    <property type="evidence" value="ECO:0007669"/>
    <property type="project" value="UniProtKB-EC"/>
</dbReference>
<dbReference type="GO" id="GO:0008270">
    <property type="term" value="F:zinc ion binding"/>
    <property type="evidence" value="ECO:0007669"/>
    <property type="project" value="UniProtKB-KW"/>
</dbReference>
<dbReference type="GO" id="GO:0006351">
    <property type="term" value="P:DNA-templated transcription"/>
    <property type="evidence" value="ECO:0007669"/>
    <property type="project" value="InterPro"/>
</dbReference>
<dbReference type="Gene3D" id="2.20.25.10">
    <property type="match status" value="1"/>
</dbReference>
<dbReference type="InterPro" id="IPR009162">
    <property type="entry name" value="RNA_pol_30_chordopoxvir-type"/>
</dbReference>
<dbReference type="InterPro" id="IPR024394">
    <property type="entry name" value="RNA_pol_30_chordopoxvir-type_N"/>
</dbReference>
<dbReference type="InterPro" id="IPR001222">
    <property type="entry name" value="Znf_TFIIS"/>
</dbReference>
<dbReference type="Pfam" id="PF12410">
    <property type="entry name" value="rpo30_N"/>
    <property type="match status" value="1"/>
</dbReference>
<dbReference type="Pfam" id="PF01096">
    <property type="entry name" value="Zn_ribbon_TFIIS"/>
    <property type="match status" value="1"/>
</dbReference>
<dbReference type="PIRSF" id="PIRSF000745">
    <property type="entry name" value="VAC_RPO30"/>
    <property type="match status" value="1"/>
</dbReference>
<dbReference type="SMART" id="SM00440">
    <property type="entry name" value="ZnF_C2C2"/>
    <property type="match status" value="1"/>
</dbReference>
<dbReference type="SUPFAM" id="SSF57783">
    <property type="entry name" value="Zinc beta-ribbon"/>
    <property type="match status" value="1"/>
</dbReference>
<dbReference type="PROSITE" id="PS00466">
    <property type="entry name" value="ZF_TFIIS_1"/>
    <property type="match status" value="1"/>
</dbReference>
<dbReference type="PROSITE" id="PS51133">
    <property type="entry name" value="ZF_TFIIS_2"/>
    <property type="match status" value="1"/>
</dbReference>
<proteinExistence type="evidence at protein level"/>
<gene>
    <name type="primary">OPG066</name>
    <name type="synonym">RPO30</name>
    <name type="ORF">E4L</name>
</gene>
<organism>
    <name type="scientific">Vaccinia virus (strain Copenhagen)</name>
    <name type="common">VACV</name>
    <dbReference type="NCBI Taxonomy" id="10249"/>
    <lineage>
        <taxon>Viruses</taxon>
        <taxon>Varidnaviria</taxon>
        <taxon>Bamfordvirae</taxon>
        <taxon>Nucleocytoviricota</taxon>
        <taxon>Pokkesviricetes</taxon>
        <taxon>Chitovirales</taxon>
        <taxon>Poxviridae</taxon>
        <taxon>Chordopoxvirinae</taxon>
        <taxon>Orthopoxvirus</taxon>
        <taxon>Vaccinia virus</taxon>
    </lineage>
</organism>
<protein>
    <recommendedName>
        <fullName>DNA-directed RNA polymerase 30 kDa polypeptide</fullName>
        <ecNumber>2.7.7.6</ecNumber>
    </recommendedName>
</protein>
<feature type="chain" id="PRO_0000121456" description="DNA-directed RNA polymerase 30 kDa polypeptide">
    <location>
        <begin position="1"/>
        <end position="259"/>
    </location>
</feature>
<feature type="zinc finger region" description="TFIIS-type" evidence="3">
    <location>
        <begin position="155"/>
        <end position="195"/>
    </location>
</feature>
<feature type="region of interest" description="Disordered" evidence="4">
    <location>
        <begin position="220"/>
        <end position="259"/>
    </location>
</feature>
<feature type="compositionally biased region" description="Pro residues" evidence="4">
    <location>
        <begin position="226"/>
        <end position="236"/>
    </location>
</feature>
<feature type="binding site" evidence="3">
    <location>
        <position position="159"/>
    </location>
    <ligand>
        <name>Zn(2+)</name>
        <dbReference type="ChEBI" id="CHEBI:29105"/>
    </ligand>
</feature>
<feature type="binding site" evidence="3">
    <location>
        <position position="162"/>
    </location>
    <ligand>
        <name>Zn(2+)</name>
        <dbReference type="ChEBI" id="CHEBI:29105"/>
    </ligand>
</feature>
<feature type="binding site" evidence="3">
    <location>
        <position position="187"/>
    </location>
    <ligand>
        <name>Zn(2+)</name>
        <dbReference type="ChEBI" id="CHEBI:29105"/>
    </ligand>
</feature>
<feature type="binding site" evidence="3">
    <location>
        <position position="190"/>
    </location>
    <ligand>
        <name>Zn(2+)</name>
        <dbReference type="ChEBI" id="CHEBI:29105"/>
    </ligand>
</feature>
<feature type="splice variant" id="VSP_018892" description="In isoform Short." evidence="5">
    <location>
        <begin position="1"/>
        <end position="16"/>
    </location>
</feature>
<evidence type="ECO:0000250" key="1">
    <source>
        <dbReference type="UniProtKB" id="O57187"/>
    </source>
</evidence>
<evidence type="ECO:0000250" key="2">
    <source>
        <dbReference type="UniProtKB" id="P21603"/>
    </source>
</evidence>
<evidence type="ECO:0000255" key="3">
    <source>
        <dbReference type="PROSITE-ProRule" id="PRU00472"/>
    </source>
</evidence>
<evidence type="ECO:0000256" key="4">
    <source>
        <dbReference type="SAM" id="MobiDB-lite"/>
    </source>
</evidence>
<evidence type="ECO:0000305" key="5"/>
<accession>P21082</accession>